<reference key="1">
    <citation type="journal article" date="1994" name="Genes Dev.">
        <title>Function and regulation of the Arabidopsis floral homeotic gene PISTILLATA.</title>
        <authorList>
            <person name="Goto K."/>
            <person name="Meyerowitz E.M."/>
        </authorList>
    </citation>
    <scope>NUCLEOTIDE SEQUENCE [MRNA]</scope>
    <source>
        <strain>cv. Landsberg erecta</strain>
    </source>
</reference>
<reference key="2">
    <citation type="journal article" date="2000" name="Development">
        <title>The Arabidopsis floral homeotic gene PISTILLATA is regulated by discrete cis-elements responsive to induction and maintenance signals.</title>
        <authorList>
            <person name="Honma T."/>
            <person name="Goto K."/>
        </authorList>
    </citation>
    <scope>NUCLEOTIDE SEQUENCE [GENOMIC DNA]</scope>
    <source>
        <strain>cv. Landsberg erecta</strain>
    </source>
</reference>
<reference key="3">
    <citation type="journal article" date="1999" name="Genetics">
        <title>Molecular population genetics of floral homeotic loci: departures from the equilibrium-neutral model at the APETALA3 and PISTILLATA genes of Arabidopsis thaliana.</title>
        <authorList>
            <person name="Purugganan M.D."/>
            <person name="Suddith J.I."/>
        </authorList>
    </citation>
    <scope>NUCLEOTIDE SEQUENCE [GENOMIC DNA]</scope>
    <scope>VARIANTS ALA-29; PRO-38; ASP-51; MET-73; PRO-75; ASP-89; GLY-112; GLY-125; ILE-140; VAL-142; ILE-160 AND THR-203</scope>
    <source>
        <strain>cv. Bla-1</strain>
        <strain>cv. Bretagny</strain>
        <strain>cv. Bs-1</strain>
        <strain>cv. Bu-0</strain>
        <strain>cv. Bu-2</strain>
        <strain>cv. Chi-1</strain>
        <strain>cv. Co-1</strain>
        <strain>cv. Columbia</strain>
        <strain>cv. Corsacalla-1</strain>
        <strain>cv. Cvi-0</strain>
        <strain>cv. Gr-3</strain>
        <strain>cv. Jl-1</strain>
        <strain>cv. Kas-1</strain>
        <strain>cv. Kent</strain>
        <strain>cv. Landsberg erecta</strain>
        <strain>cv. Li-3</strain>
        <strain>cv. Li-8</strain>
        <strain>cv. Lisse</strain>
    </source>
</reference>
<reference key="4">
    <citation type="journal article" date="2000" name="Nature">
        <title>Sequence and analysis of chromosome 5 of the plant Arabidopsis thaliana.</title>
        <authorList>
            <person name="Tabata S."/>
            <person name="Kaneko T."/>
            <person name="Nakamura Y."/>
            <person name="Kotani H."/>
            <person name="Kato T."/>
            <person name="Asamizu E."/>
            <person name="Miyajima N."/>
            <person name="Sasamoto S."/>
            <person name="Kimura T."/>
            <person name="Hosouchi T."/>
            <person name="Kawashima K."/>
            <person name="Kohara M."/>
            <person name="Matsumoto M."/>
            <person name="Matsuno A."/>
            <person name="Muraki A."/>
            <person name="Nakayama S."/>
            <person name="Nakazaki N."/>
            <person name="Naruo K."/>
            <person name="Okumura S."/>
            <person name="Shinpo S."/>
            <person name="Takeuchi C."/>
            <person name="Wada T."/>
            <person name="Watanabe A."/>
            <person name="Yamada M."/>
            <person name="Yasuda M."/>
            <person name="Sato S."/>
            <person name="de la Bastide M."/>
            <person name="Huang E."/>
            <person name="Spiegel L."/>
            <person name="Gnoj L."/>
            <person name="O'Shaughnessy A."/>
            <person name="Preston R."/>
            <person name="Habermann K."/>
            <person name="Murray J."/>
            <person name="Johnson D."/>
            <person name="Rohlfing T."/>
            <person name="Nelson J."/>
            <person name="Stoneking T."/>
            <person name="Pepin K."/>
            <person name="Spieth J."/>
            <person name="Sekhon M."/>
            <person name="Armstrong J."/>
            <person name="Becker M."/>
            <person name="Belter E."/>
            <person name="Cordum H."/>
            <person name="Cordes M."/>
            <person name="Courtney L."/>
            <person name="Courtney W."/>
            <person name="Dante M."/>
            <person name="Du H."/>
            <person name="Edwards J."/>
            <person name="Fryman J."/>
            <person name="Haakensen B."/>
            <person name="Lamar E."/>
            <person name="Latreille P."/>
            <person name="Leonard S."/>
            <person name="Meyer R."/>
            <person name="Mulvaney E."/>
            <person name="Ozersky P."/>
            <person name="Riley A."/>
            <person name="Strowmatt C."/>
            <person name="Wagner-McPherson C."/>
            <person name="Wollam A."/>
            <person name="Yoakum M."/>
            <person name="Bell M."/>
            <person name="Dedhia N."/>
            <person name="Parnell L."/>
            <person name="Shah R."/>
            <person name="Rodriguez M."/>
            <person name="Hoon See L."/>
            <person name="Vil D."/>
            <person name="Baker J."/>
            <person name="Kirchoff K."/>
            <person name="Toth K."/>
            <person name="King L."/>
            <person name="Bahret A."/>
            <person name="Miller B."/>
            <person name="Marra M.A."/>
            <person name="Martienssen R."/>
            <person name="McCombie W.R."/>
            <person name="Wilson R.K."/>
            <person name="Murphy G."/>
            <person name="Bancroft I."/>
            <person name="Volckaert G."/>
            <person name="Wambutt R."/>
            <person name="Duesterhoeft A."/>
            <person name="Stiekema W."/>
            <person name="Pohl T."/>
            <person name="Entian K.-D."/>
            <person name="Terryn N."/>
            <person name="Hartley N."/>
            <person name="Bent E."/>
            <person name="Johnson S."/>
            <person name="Langham S.-A."/>
            <person name="McCullagh B."/>
            <person name="Robben J."/>
            <person name="Grymonprez B."/>
            <person name="Zimmermann W."/>
            <person name="Ramsperger U."/>
            <person name="Wedler H."/>
            <person name="Balke K."/>
            <person name="Wedler E."/>
            <person name="Peters S."/>
            <person name="van Staveren M."/>
            <person name="Dirkse W."/>
            <person name="Mooijman P."/>
            <person name="Klein Lankhorst R."/>
            <person name="Weitzenegger T."/>
            <person name="Bothe G."/>
            <person name="Rose M."/>
            <person name="Hauf J."/>
            <person name="Berneiser S."/>
            <person name="Hempel S."/>
            <person name="Feldpausch M."/>
            <person name="Lamberth S."/>
            <person name="Villarroel R."/>
            <person name="Gielen J."/>
            <person name="Ardiles W."/>
            <person name="Bents O."/>
            <person name="Lemcke K."/>
            <person name="Kolesov G."/>
            <person name="Mayer K.F.X."/>
            <person name="Rudd S."/>
            <person name="Schoof H."/>
            <person name="Schueller C."/>
            <person name="Zaccaria P."/>
            <person name="Mewes H.-W."/>
            <person name="Bevan M."/>
            <person name="Fransz P.F."/>
        </authorList>
    </citation>
    <scope>NUCLEOTIDE SEQUENCE [LARGE SCALE GENOMIC DNA]</scope>
    <source>
        <strain>cv. Columbia</strain>
    </source>
</reference>
<reference key="5">
    <citation type="journal article" date="2017" name="Plant J.">
        <title>Araport11: a complete reannotation of the Arabidopsis thaliana reference genome.</title>
        <authorList>
            <person name="Cheng C.Y."/>
            <person name="Krishnakumar V."/>
            <person name="Chan A.P."/>
            <person name="Thibaud-Nissen F."/>
            <person name="Schobel S."/>
            <person name="Town C.D."/>
        </authorList>
    </citation>
    <scope>GENOME REANNOTATION</scope>
    <source>
        <strain>cv. Columbia</strain>
    </source>
</reference>
<reference key="6">
    <citation type="journal article" date="1996" name="Development">
        <title>The Arabidopsis homeotic genes APETALA3 and PISTILLATA are sufficient to provide the B class organ identity function.</title>
        <authorList>
            <person name="Krizek B.A."/>
            <person name="Meyerowitz E.M."/>
        </authorList>
    </citation>
    <scope>FUNCTION</scope>
</reference>
<reference key="7">
    <citation type="journal article" date="1998" name="Cell">
        <title>A homolog of NO APICAL MERISTEM is an immediate target of the floral homeotic genes APETALA3/PISTILLATA.</title>
        <authorList>
            <person name="Sablowski R.W.M."/>
            <person name="Meyerowitz E.M."/>
        </authorList>
    </citation>
    <scope>FUNCTION IN NAP EXPRESSION</scope>
</reference>
<reference key="8">
    <citation type="journal article" date="1996" name="Proc. Natl. Acad. Sci. U.S.A.">
        <title>Dimerization specificity of Arabidopsis MADS domain homeotic proteins APETALA1, APETALA3, PISTILLATA, and AGAMOUS.</title>
        <authorList>
            <person name="Riechmann J.L."/>
            <person name="Krizek B.A."/>
            <person name="Meyerowitz E.M."/>
        </authorList>
    </citation>
    <scope>CHARACTERIZATION</scope>
</reference>
<reference key="9">
    <citation type="journal article" date="2001" name="Plant Cell">
        <title>Activation of the Arabidopsis B class homeotic genes by APETALA1.</title>
        <authorList>
            <person name="Ng M."/>
            <person name="Yanofsky M.F."/>
        </authorList>
    </citation>
    <scope>INDUCTION</scope>
</reference>
<reference key="10">
    <citation type="journal article" date="2001" name="Nature">
        <title>Complexes of MADS-box proteins are sufficient to convert leaves into floral organs.</title>
        <authorList>
            <person name="Honma T."/>
            <person name="Goto K."/>
        </authorList>
    </citation>
    <scope>CHARACTERIZATION</scope>
</reference>
<reference key="11">
    <citation type="journal article" date="2008" name="Plant Physiol.">
        <title>Two GATA transcription factors are downstream effectors of floral homeotic gene action in Arabidopsis.</title>
        <authorList>
            <person name="Mara C.D."/>
            <person name="Irish V.F."/>
        </authorList>
    </citation>
    <scope>FUNCTION</scope>
</reference>
<reference key="12">
    <citation type="journal article" date="2010" name="Plant Physiol.">
        <title>Epigenetic regulation of gene programs by EMF1 and EMF2 in Arabidopsis.</title>
        <authorList>
            <person name="Kim S.Y."/>
            <person name="Zhu T."/>
            <person name="Sung Z.R."/>
        </authorList>
    </citation>
    <scope>INDUCTION BY EMF1 AND EMF2</scope>
</reference>
<name>PIST_ARATH</name>
<dbReference type="EMBL" id="D30807">
    <property type="protein sequence ID" value="BAA06465.1"/>
    <property type="molecule type" value="mRNA"/>
</dbReference>
<dbReference type="EMBL" id="AB035137">
    <property type="protein sequence ID" value="BAA87000.1"/>
    <property type="molecule type" value="Genomic_DNA"/>
</dbReference>
<dbReference type="EMBL" id="AF115815">
    <property type="protein sequence ID" value="AAD51984.1"/>
    <property type="molecule type" value="Genomic_DNA"/>
</dbReference>
<dbReference type="EMBL" id="AF115816">
    <property type="protein sequence ID" value="AAD51985.1"/>
    <property type="molecule type" value="Genomic_DNA"/>
</dbReference>
<dbReference type="EMBL" id="AF115817">
    <property type="protein sequence ID" value="AAD51986.1"/>
    <property type="molecule type" value="Genomic_DNA"/>
</dbReference>
<dbReference type="EMBL" id="AF115818">
    <property type="protein sequence ID" value="AAD51987.1"/>
    <property type="molecule type" value="Genomic_DNA"/>
</dbReference>
<dbReference type="EMBL" id="AF115819">
    <property type="protein sequence ID" value="AAD51988.1"/>
    <property type="molecule type" value="Genomic_DNA"/>
</dbReference>
<dbReference type="EMBL" id="AF115820">
    <property type="protein sequence ID" value="AAD51989.1"/>
    <property type="molecule type" value="Genomic_DNA"/>
</dbReference>
<dbReference type="EMBL" id="AF115821">
    <property type="protein sequence ID" value="AAD51990.1"/>
    <property type="molecule type" value="Genomic_DNA"/>
</dbReference>
<dbReference type="EMBL" id="AF115822">
    <property type="protein sequence ID" value="AAD51991.1"/>
    <property type="molecule type" value="Genomic_DNA"/>
</dbReference>
<dbReference type="EMBL" id="AF115823">
    <property type="protein sequence ID" value="AAD51992.1"/>
    <property type="molecule type" value="Genomic_DNA"/>
</dbReference>
<dbReference type="EMBL" id="AF115824">
    <property type="protein sequence ID" value="AAD51993.1"/>
    <property type="molecule type" value="Genomic_DNA"/>
</dbReference>
<dbReference type="EMBL" id="AF115825">
    <property type="protein sequence ID" value="AAD51994.1"/>
    <property type="molecule type" value="Genomic_DNA"/>
</dbReference>
<dbReference type="EMBL" id="AF115826">
    <property type="protein sequence ID" value="AAD51995.1"/>
    <property type="molecule type" value="Genomic_DNA"/>
</dbReference>
<dbReference type="EMBL" id="AF115827">
    <property type="protein sequence ID" value="AAD51996.1"/>
    <property type="molecule type" value="Genomic_DNA"/>
</dbReference>
<dbReference type="EMBL" id="AF115828">
    <property type="protein sequence ID" value="AAD51997.1"/>
    <property type="molecule type" value="Genomic_DNA"/>
</dbReference>
<dbReference type="EMBL" id="AF115829">
    <property type="protein sequence ID" value="AAD51998.1"/>
    <property type="molecule type" value="Genomic_DNA"/>
</dbReference>
<dbReference type="EMBL" id="AF115830">
    <property type="protein sequence ID" value="AAD51999.1"/>
    <property type="molecule type" value="Genomic_DNA"/>
</dbReference>
<dbReference type="EMBL" id="AF296825">
    <property type="status" value="NOT_ANNOTATED_CDS"/>
    <property type="molecule type" value="Genomic_DNA"/>
</dbReference>
<dbReference type="EMBL" id="CP002688">
    <property type="protein sequence ID" value="AED92817.1"/>
    <property type="molecule type" value="Genomic_DNA"/>
</dbReference>
<dbReference type="PIR" id="A53839">
    <property type="entry name" value="A53839"/>
</dbReference>
<dbReference type="RefSeq" id="NP_197524.1">
    <property type="nucleotide sequence ID" value="NM_122031.4"/>
</dbReference>
<dbReference type="SMR" id="P48007"/>
<dbReference type="BioGRID" id="17422">
    <property type="interactions" value="21"/>
</dbReference>
<dbReference type="FunCoup" id="P48007">
    <property type="interactions" value="56"/>
</dbReference>
<dbReference type="IntAct" id="P48007">
    <property type="interactions" value="11"/>
</dbReference>
<dbReference type="STRING" id="3702.P48007"/>
<dbReference type="PaxDb" id="3702-AT5G20240.1"/>
<dbReference type="ProteomicsDB" id="236740"/>
<dbReference type="EnsemblPlants" id="AT5G20240.1">
    <property type="protein sequence ID" value="AT5G20240.1"/>
    <property type="gene ID" value="AT5G20240"/>
</dbReference>
<dbReference type="GeneID" id="832146"/>
<dbReference type="Gramene" id="AT5G20240.1">
    <property type="protein sequence ID" value="AT5G20240.1"/>
    <property type="gene ID" value="AT5G20240"/>
</dbReference>
<dbReference type="KEGG" id="ath:AT5G20240"/>
<dbReference type="Araport" id="AT5G20240"/>
<dbReference type="TAIR" id="AT5G20240">
    <property type="gene designation" value="PI"/>
</dbReference>
<dbReference type="eggNOG" id="KOG0014">
    <property type="taxonomic scope" value="Eukaryota"/>
</dbReference>
<dbReference type="HOGENOM" id="CLU_053053_0_4_1"/>
<dbReference type="InParanoid" id="P48007"/>
<dbReference type="OMA" id="GYHQKGR"/>
<dbReference type="OrthoDB" id="1898716at2759"/>
<dbReference type="PhylomeDB" id="P48007"/>
<dbReference type="PRO" id="PR:P48007"/>
<dbReference type="Proteomes" id="UP000006548">
    <property type="component" value="Chromosome 5"/>
</dbReference>
<dbReference type="ExpressionAtlas" id="P48007">
    <property type="expression patterns" value="baseline and differential"/>
</dbReference>
<dbReference type="GO" id="GO:0005737">
    <property type="term" value="C:cytoplasm"/>
    <property type="evidence" value="ECO:0000314"/>
    <property type="project" value="TAIR"/>
</dbReference>
<dbReference type="GO" id="GO:0005634">
    <property type="term" value="C:nucleus"/>
    <property type="evidence" value="ECO:0000314"/>
    <property type="project" value="TAIR"/>
</dbReference>
<dbReference type="GO" id="GO:0003677">
    <property type="term" value="F:DNA binding"/>
    <property type="evidence" value="ECO:0000314"/>
    <property type="project" value="TAIR"/>
</dbReference>
<dbReference type="GO" id="GO:0003700">
    <property type="term" value="F:DNA-binding transcription factor activity"/>
    <property type="evidence" value="ECO:0000250"/>
    <property type="project" value="TAIR"/>
</dbReference>
<dbReference type="GO" id="GO:0046983">
    <property type="term" value="F:protein dimerization activity"/>
    <property type="evidence" value="ECO:0007669"/>
    <property type="project" value="InterPro"/>
</dbReference>
<dbReference type="GO" id="GO:0000977">
    <property type="term" value="F:RNA polymerase II transcription regulatory region sequence-specific DNA binding"/>
    <property type="evidence" value="ECO:0007669"/>
    <property type="project" value="InterPro"/>
</dbReference>
<dbReference type="GO" id="GO:0000976">
    <property type="term" value="F:transcription cis-regulatory region binding"/>
    <property type="evidence" value="ECO:0000353"/>
    <property type="project" value="TAIR"/>
</dbReference>
<dbReference type="GO" id="GO:0030154">
    <property type="term" value="P:cell differentiation"/>
    <property type="evidence" value="ECO:0007669"/>
    <property type="project" value="UniProtKB-KW"/>
</dbReference>
<dbReference type="GO" id="GO:0045944">
    <property type="term" value="P:positive regulation of transcription by RNA polymerase II"/>
    <property type="evidence" value="ECO:0007669"/>
    <property type="project" value="InterPro"/>
</dbReference>
<dbReference type="GO" id="GO:0010093">
    <property type="term" value="P:specification of floral organ identity"/>
    <property type="evidence" value="ECO:0000315"/>
    <property type="project" value="CACAO"/>
</dbReference>
<dbReference type="CDD" id="cd00265">
    <property type="entry name" value="MADS_MEF2_like"/>
    <property type="match status" value="1"/>
</dbReference>
<dbReference type="FunFam" id="3.40.1810.10:FF:000017">
    <property type="entry name" value="PISTILLATA-like MADS-box transcription factor"/>
    <property type="match status" value="1"/>
</dbReference>
<dbReference type="Gene3D" id="3.40.1810.10">
    <property type="entry name" value="Transcription factor, MADS-box"/>
    <property type="match status" value="1"/>
</dbReference>
<dbReference type="InterPro" id="IPR050142">
    <property type="entry name" value="MADS-box/MEF2_TF"/>
</dbReference>
<dbReference type="InterPro" id="IPR033896">
    <property type="entry name" value="MEF2-like_N"/>
</dbReference>
<dbReference type="InterPro" id="IPR002487">
    <property type="entry name" value="TF_Kbox"/>
</dbReference>
<dbReference type="InterPro" id="IPR002100">
    <property type="entry name" value="TF_MADSbox"/>
</dbReference>
<dbReference type="InterPro" id="IPR036879">
    <property type="entry name" value="TF_MADSbox_sf"/>
</dbReference>
<dbReference type="PANTHER" id="PTHR48019">
    <property type="entry name" value="SERUM RESPONSE FACTOR HOMOLOG"/>
    <property type="match status" value="1"/>
</dbReference>
<dbReference type="Pfam" id="PF01486">
    <property type="entry name" value="K-box"/>
    <property type="match status" value="1"/>
</dbReference>
<dbReference type="Pfam" id="PF00319">
    <property type="entry name" value="SRF-TF"/>
    <property type="match status" value="1"/>
</dbReference>
<dbReference type="PRINTS" id="PR00404">
    <property type="entry name" value="MADSDOMAIN"/>
</dbReference>
<dbReference type="SMART" id="SM00432">
    <property type="entry name" value="MADS"/>
    <property type="match status" value="1"/>
</dbReference>
<dbReference type="SUPFAM" id="SSF55455">
    <property type="entry name" value="SRF-like"/>
    <property type="match status" value="1"/>
</dbReference>
<dbReference type="PROSITE" id="PS51297">
    <property type="entry name" value="K_BOX"/>
    <property type="match status" value="1"/>
</dbReference>
<dbReference type="PROSITE" id="PS00350">
    <property type="entry name" value="MADS_BOX_1"/>
    <property type="match status" value="1"/>
</dbReference>
<dbReference type="PROSITE" id="PS50066">
    <property type="entry name" value="MADS_BOX_2"/>
    <property type="match status" value="1"/>
</dbReference>
<sequence length="208" mass="24047">MGRGKIEIKRIENANNRVVTFSKRRNGLVKKAKEITVLCDAKVALIIFASNGKMIDYCCPSMDLGAMLDQYQKLSGKKLWDAKHENLSNEIDRIKKENDSLQLELRHLKGEDIQSLNLKNLMAVEHAIEHGLDKVRDHQMEILISKRRNEKMMAEEQRQLTFQLQQQEMAIASNARGMMMRDHDGQFGYRVQPIQPNLQEKIMSLVID</sequence>
<gene>
    <name type="primary">PI</name>
    <name type="ordered locus">At5g20240</name>
    <name type="ORF">F5O24.130</name>
</gene>
<organism>
    <name type="scientific">Arabidopsis thaliana</name>
    <name type="common">Mouse-ear cress</name>
    <dbReference type="NCBI Taxonomy" id="3702"/>
    <lineage>
        <taxon>Eukaryota</taxon>
        <taxon>Viridiplantae</taxon>
        <taxon>Streptophyta</taxon>
        <taxon>Embryophyta</taxon>
        <taxon>Tracheophyta</taxon>
        <taxon>Spermatophyta</taxon>
        <taxon>Magnoliopsida</taxon>
        <taxon>eudicotyledons</taxon>
        <taxon>Gunneridae</taxon>
        <taxon>Pentapetalae</taxon>
        <taxon>rosids</taxon>
        <taxon>malvids</taxon>
        <taxon>Brassicales</taxon>
        <taxon>Brassicaceae</taxon>
        <taxon>Camelineae</taxon>
        <taxon>Arabidopsis</taxon>
    </lineage>
</organism>
<proteinExistence type="evidence at protein level"/>
<keyword id="KW-0010">Activator</keyword>
<keyword id="KW-0175">Coiled coil</keyword>
<keyword id="KW-0217">Developmental protein</keyword>
<keyword id="KW-0221">Differentiation</keyword>
<keyword id="KW-0238">DNA-binding</keyword>
<keyword id="KW-0287">Flowering</keyword>
<keyword id="KW-0539">Nucleus</keyword>
<keyword id="KW-1185">Reference proteome</keyword>
<keyword id="KW-0804">Transcription</keyword>
<keyword id="KW-0805">Transcription regulation</keyword>
<feature type="chain" id="PRO_0000199482" description="Floral homeotic protein PISTILLATA">
    <location>
        <begin position="1"/>
        <end position="208"/>
    </location>
</feature>
<feature type="domain" description="MADS-box" evidence="2">
    <location>
        <begin position="3"/>
        <end position="57"/>
    </location>
</feature>
<feature type="domain" description="K-box" evidence="3">
    <location>
        <begin position="84"/>
        <end position="170"/>
    </location>
</feature>
<feature type="coiled-coil region" evidence="1">
    <location>
        <begin position="75"/>
        <end position="117"/>
    </location>
</feature>
<feature type="sequence variant" description="In strain: cv. Cvi-0." evidence="9">
    <original>V</original>
    <variation>A</variation>
    <location>
        <position position="29"/>
    </location>
</feature>
<feature type="sequence variant" description="In strain: cv. Co-1." evidence="9">
    <original>L</original>
    <variation>P</variation>
    <location>
        <position position="38"/>
    </location>
</feature>
<feature type="sequence variant" description="In strain: cv. Lisse." evidence="9">
    <original>N</original>
    <variation>D</variation>
    <location>
        <position position="51"/>
    </location>
</feature>
<feature type="sequence variant" description="In strain: cv. Co-1." evidence="9">
    <original>K</original>
    <variation>M</variation>
    <location>
        <position position="73"/>
    </location>
</feature>
<feature type="sequence variant" description="In strain: cv. Kent." evidence="9">
    <original>S</original>
    <variation>P</variation>
    <location>
        <position position="75"/>
    </location>
</feature>
<feature type="sequence variant" description="In strain: cv. Gr-3." evidence="9">
    <original>N</original>
    <variation>D</variation>
    <location>
        <position position="89"/>
    </location>
</feature>
<feature type="sequence variant" description="In strain: cv. Lisse." evidence="9">
    <original>D</original>
    <variation>G</variation>
    <location>
        <position position="112"/>
    </location>
</feature>
<feature type="sequence variant" description="In strain: cv. Gr-3." evidence="9">
    <original>E</original>
    <variation>G</variation>
    <location>
        <position position="125"/>
    </location>
</feature>
<feature type="sequence variant" description="In strain: cv. Corsacalla-1." evidence="9">
    <original>M</original>
    <variation>I</variation>
    <location>
        <position position="140"/>
    </location>
</feature>
<feature type="sequence variant" description="In strain: cv. Kent." evidence="9">
    <original>I</original>
    <variation>V</variation>
    <location>
        <position position="142"/>
    </location>
</feature>
<feature type="sequence variant" description="In strain: cv. Kent." evidence="9">
    <original>L</original>
    <variation>I</variation>
    <location>
        <position position="160"/>
    </location>
</feature>
<feature type="sequence variant" description="In strain: cv. Cvi-0." evidence="9">
    <original>M</original>
    <variation>T</variation>
    <location>
        <position position="203"/>
    </location>
</feature>
<accession>P48007</accession>
<accession>Q9SQ07</accession>
<accession>Q9SQ08</accession>
<accession>Q9SQ09</accession>
<accession>Q9SQ10</accession>
<accession>Q9SQ11</accession>
<accession>Q9SQ12</accession>
<accession>Q9SQ13</accession>
<comment type="function">
    <text evidence="5 7 8">Probable transcription factor involved in the genetic control of flower development. Is required for normal development of petals and stamens in the wild-type flower. Forms a heterodimer with APETALA3 that is required for autoregulation of both AP3 and PI genes. AP3/PI heterodimer interacts with APETALA1 or SEPALLATA3 to form a ternary complex that could be responsible for the regulation of the genes involved in the flower development. AP3/PI heterodimer activates the expression of NAP. AP3/PI prevents GATA22/GNL and GATA21/GNC expression (PubMed:18417639).</text>
</comment>
<comment type="subunit">
    <text>Forms a heterodimer with APETALA3, capable of binding to CArG-box sequences. AP3/PI heterodimer binds AP1 or SEP3 to form a ternary complex.</text>
</comment>
<comment type="interaction">
    <interactant intactId="EBI-1395334">
        <id>P48007</id>
    </interactant>
    <interactant intactId="EBI-592020">
        <id>O22456</id>
        <label>SEP3</label>
    </interactant>
    <organismsDiffer>false</organismsDiffer>
    <experiments>3</experiments>
</comment>
<comment type="subcellular location">
    <subcellularLocation>
        <location>Nucleus</location>
    </subcellularLocation>
</comment>
<comment type="induction">
    <text evidence="4 6">Positively regulated by the meristem identity proteins APETALA1 and LEAFY with the cooperation of UFO. Repressed by silencing mediated by polycomb group (PcG) protein complex containing EMF1 and EMF2.</text>
</comment>
<comment type="miscellaneous">
    <text>Mutations in PI cause transformation of petals into sepals and stamina into carpels.</text>
</comment>
<protein>
    <recommendedName>
        <fullName>Floral homeotic protein PISTILLATA</fullName>
    </recommendedName>
    <alternativeName>
        <fullName>Transcription factor PI</fullName>
    </alternativeName>
</protein>
<evidence type="ECO:0000255" key="1"/>
<evidence type="ECO:0000255" key="2">
    <source>
        <dbReference type="PROSITE-ProRule" id="PRU00251"/>
    </source>
</evidence>
<evidence type="ECO:0000255" key="3">
    <source>
        <dbReference type="PROSITE-ProRule" id="PRU00629"/>
    </source>
</evidence>
<evidence type="ECO:0000269" key="4">
    <source>
    </source>
</evidence>
<evidence type="ECO:0000269" key="5">
    <source>
    </source>
</evidence>
<evidence type="ECO:0000269" key="6">
    <source>
    </source>
</evidence>
<evidence type="ECO:0000269" key="7">
    <source>
    </source>
</evidence>
<evidence type="ECO:0000269" key="8">
    <source>
    </source>
</evidence>
<evidence type="ECO:0000269" key="9">
    <source>
    </source>
</evidence>